<gene>
    <name evidence="1" type="primary">ftsB</name>
    <name type="ordered locus">E2348C_3018</name>
</gene>
<sequence length="103" mass="11621">MGKLTLLLLAILVWLQYSLWFGKNGIHDYTRVNNDVAAQQATNAKLKARNDQLFAEIDDLNGGQEALEERARNELSMTRPGETFYRLVPDASKRAQSAGQNNR</sequence>
<accession>B7UHG7</accession>
<evidence type="ECO:0000255" key="1">
    <source>
        <dbReference type="HAMAP-Rule" id="MF_00599"/>
    </source>
</evidence>
<dbReference type="EMBL" id="FM180568">
    <property type="protein sequence ID" value="CAS10566.1"/>
    <property type="molecule type" value="Genomic_DNA"/>
</dbReference>
<dbReference type="RefSeq" id="WP_000517479.1">
    <property type="nucleotide sequence ID" value="NC_011601.1"/>
</dbReference>
<dbReference type="SMR" id="B7UHG7"/>
<dbReference type="GeneID" id="89517564"/>
<dbReference type="KEGG" id="ecg:E2348C_3018"/>
<dbReference type="HOGENOM" id="CLU_134863_5_2_6"/>
<dbReference type="Proteomes" id="UP000008205">
    <property type="component" value="Chromosome"/>
</dbReference>
<dbReference type="GO" id="GO:0032153">
    <property type="term" value="C:cell division site"/>
    <property type="evidence" value="ECO:0007669"/>
    <property type="project" value="UniProtKB-UniRule"/>
</dbReference>
<dbReference type="GO" id="GO:0030428">
    <property type="term" value="C:cell septum"/>
    <property type="evidence" value="ECO:0007669"/>
    <property type="project" value="TreeGrafter"/>
</dbReference>
<dbReference type="GO" id="GO:0005886">
    <property type="term" value="C:plasma membrane"/>
    <property type="evidence" value="ECO:0007669"/>
    <property type="project" value="UniProtKB-SubCell"/>
</dbReference>
<dbReference type="GO" id="GO:0043093">
    <property type="term" value="P:FtsZ-dependent cytokinesis"/>
    <property type="evidence" value="ECO:0007669"/>
    <property type="project" value="UniProtKB-UniRule"/>
</dbReference>
<dbReference type="FunFam" id="1.20.5.400:FF:000001">
    <property type="entry name" value="Cell division protein FtsB"/>
    <property type="match status" value="1"/>
</dbReference>
<dbReference type="Gene3D" id="1.20.5.400">
    <property type="match status" value="1"/>
</dbReference>
<dbReference type="HAMAP" id="MF_00599">
    <property type="entry name" value="FtsB"/>
    <property type="match status" value="1"/>
</dbReference>
<dbReference type="InterPro" id="IPR023081">
    <property type="entry name" value="Cell_div_FtsB"/>
</dbReference>
<dbReference type="InterPro" id="IPR007060">
    <property type="entry name" value="FtsL/DivIC"/>
</dbReference>
<dbReference type="NCBIfam" id="NF002058">
    <property type="entry name" value="PRK00888.1"/>
    <property type="match status" value="1"/>
</dbReference>
<dbReference type="PANTHER" id="PTHR37485">
    <property type="entry name" value="CELL DIVISION PROTEIN FTSB"/>
    <property type="match status" value="1"/>
</dbReference>
<dbReference type="PANTHER" id="PTHR37485:SF1">
    <property type="entry name" value="CELL DIVISION PROTEIN FTSB"/>
    <property type="match status" value="1"/>
</dbReference>
<dbReference type="Pfam" id="PF04977">
    <property type="entry name" value="DivIC"/>
    <property type="match status" value="1"/>
</dbReference>
<feature type="chain" id="PRO_1000147003" description="Cell division protein FtsB">
    <location>
        <begin position="1"/>
        <end position="103"/>
    </location>
</feature>
<feature type="topological domain" description="Cytoplasmic" evidence="1">
    <location>
        <begin position="1"/>
        <end position="3"/>
    </location>
</feature>
<feature type="transmembrane region" description="Helical" evidence="1">
    <location>
        <begin position="4"/>
        <end position="21"/>
    </location>
</feature>
<feature type="topological domain" description="Periplasmic" evidence="1">
    <location>
        <begin position="22"/>
        <end position="103"/>
    </location>
</feature>
<feature type="coiled-coil region" evidence="1">
    <location>
        <begin position="31"/>
        <end position="71"/>
    </location>
</feature>
<keyword id="KW-0131">Cell cycle</keyword>
<keyword id="KW-0132">Cell division</keyword>
<keyword id="KW-0997">Cell inner membrane</keyword>
<keyword id="KW-1003">Cell membrane</keyword>
<keyword id="KW-0175">Coiled coil</keyword>
<keyword id="KW-0472">Membrane</keyword>
<keyword id="KW-1185">Reference proteome</keyword>
<keyword id="KW-0812">Transmembrane</keyword>
<keyword id="KW-1133">Transmembrane helix</keyword>
<reference key="1">
    <citation type="journal article" date="2009" name="J. Bacteriol.">
        <title>Complete genome sequence and comparative genome analysis of enteropathogenic Escherichia coli O127:H6 strain E2348/69.</title>
        <authorList>
            <person name="Iguchi A."/>
            <person name="Thomson N.R."/>
            <person name="Ogura Y."/>
            <person name="Saunders D."/>
            <person name="Ooka T."/>
            <person name="Henderson I.R."/>
            <person name="Harris D."/>
            <person name="Asadulghani M."/>
            <person name="Kurokawa K."/>
            <person name="Dean P."/>
            <person name="Kenny B."/>
            <person name="Quail M.A."/>
            <person name="Thurston S."/>
            <person name="Dougan G."/>
            <person name="Hayashi T."/>
            <person name="Parkhill J."/>
            <person name="Frankel G."/>
        </authorList>
    </citation>
    <scope>NUCLEOTIDE SEQUENCE [LARGE SCALE GENOMIC DNA]</scope>
    <source>
        <strain>E2348/69 / EPEC</strain>
    </source>
</reference>
<comment type="function">
    <text evidence="1">Essential cell division protein. May link together the upstream cell division proteins, which are predominantly cytoplasmic, with the downstream cell division proteins, which are predominantly periplasmic.</text>
</comment>
<comment type="subunit">
    <text evidence="1">Part of a complex composed of FtsB, FtsL and FtsQ.</text>
</comment>
<comment type="subcellular location">
    <subcellularLocation>
        <location evidence="1">Cell inner membrane</location>
        <topology evidence="1">Single-pass type II membrane protein</topology>
    </subcellularLocation>
    <text evidence="1">Localizes to the division septum.</text>
</comment>
<comment type="similarity">
    <text evidence="1">Belongs to the FtsB family.</text>
</comment>
<proteinExistence type="inferred from homology"/>
<organism>
    <name type="scientific">Escherichia coli O127:H6 (strain E2348/69 / EPEC)</name>
    <dbReference type="NCBI Taxonomy" id="574521"/>
    <lineage>
        <taxon>Bacteria</taxon>
        <taxon>Pseudomonadati</taxon>
        <taxon>Pseudomonadota</taxon>
        <taxon>Gammaproteobacteria</taxon>
        <taxon>Enterobacterales</taxon>
        <taxon>Enterobacteriaceae</taxon>
        <taxon>Escherichia</taxon>
    </lineage>
</organism>
<name>FTSB_ECO27</name>
<protein>
    <recommendedName>
        <fullName evidence="1">Cell division protein FtsB</fullName>
    </recommendedName>
</protein>